<organism>
    <name type="scientific">Bradyrhizobium sp. (strain BTAi1 / ATCC BAA-1182)</name>
    <dbReference type="NCBI Taxonomy" id="288000"/>
    <lineage>
        <taxon>Bacteria</taxon>
        <taxon>Pseudomonadati</taxon>
        <taxon>Pseudomonadota</taxon>
        <taxon>Alphaproteobacteria</taxon>
        <taxon>Hyphomicrobiales</taxon>
        <taxon>Nitrobacteraceae</taxon>
        <taxon>Bradyrhizobium</taxon>
    </lineage>
</organism>
<feature type="chain" id="PRO_0000349018" description="Heme A synthase">
    <location>
        <begin position="1"/>
        <end position="362"/>
    </location>
</feature>
<feature type="transmembrane region" description="Helical" evidence="1">
    <location>
        <begin position="10"/>
        <end position="30"/>
    </location>
</feature>
<feature type="transmembrane region" description="Helical" evidence="1">
    <location>
        <begin position="102"/>
        <end position="122"/>
    </location>
</feature>
<feature type="transmembrane region" description="Helical" evidence="1">
    <location>
        <begin position="128"/>
        <end position="148"/>
    </location>
</feature>
<feature type="transmembrane region" description="Helical" evidence="1">
    <location>
        <begin position="159"/>
        <end position="179"/>
    </location>
</feature>
<feature type="transmembrane region" description="Helical" evidence="1">
    <location>
        <begin position="198"/>
        <end position="218"/>
    </location>
</feature>
<feature type="transmembrane region" description="Helical" evidence="1">
    <location>
        <begin position="266"/>
        <end position="286"/>
    </location>
</feature>
<feature type="transmembrane region" description="Helical" evidence="1">
    <location>
        <begin position="297"/>
        <end position="317"/>
    </location>
</feature>
<feature type="transmembrane region" description="Helical" evidence="1">
    <location>
        <begin position="318"/>
        <end position="338"/>
    </location>
</feature>
<feature type="binding site" description="axial binding residue" evidence="1">
    <location>
        <position position="262"/>
    </location>
    <ligand>
        <name>heme</name>
        <dbReference type="ChEBI" id="CHEBI:30413"/>
    </ligand>
    <ligandPart>
        <name>Fe</name>
        <dbReference type="ChEBI" id="CHEBI:18248"/>
    </ligandPart>
</feature>
<feature type="binding site" description="axial binding residue" evidence="1">
    <location>
        <position position="323"/>
    </location>
    <ligand>
        <name>heme</name>
        <dbReference type="ChEBI" id="CHEBI:30413"/>
    </ligand>
    <ligandPart>
        <name>Fe</name>
        <dbReference type="ChEBI" id="CHEBI:18248"/>
    </ligandPart>
</feature>
<protein>
    <recommendedName>
        <fullName evidence="1">Heme A synthase</fullName>
        <shortName evidence="1">HAS</shortName>
        <ecNumber evidence="1">1.17.99.9</ecNumber>
    </recommendedName>
    <alternativeName>
        <fullName evidence="1">Cytochrome aa3-controlling protein</fullName>
    </alternativeName>
</protein>
<sequence length="362" mass="39717">MTTVPRTTDLAAIRIWLTVVAGLIALMVLVGGATRLTESGLSIVEWKPVTGTLPPLSERAWTDAFEAYKTIPQYRQMNAGMTLHEFKTIFWWEWGHRLLGRVIGMVYLLPFLWFLWRGAVSGPLGRRLWLIFGLGALQGAVGWWMVASGLTERTEVAPVRLATHLSLALLIFAAIVWTLRRLAPRAEAEVPARLRLTAWGLVGVTFVQLYLGALVAGLRAGLVYNTWPDIDGGLIPKAANLWIQSPWWINLFENDLTVQFMHRMTAYTLFLLGAWHAFDVMRAGAGRTVVRGAHRLLAAILVQAGLGIATLLMVVPISLALLHQGTAIIVLTFAVLQAERLSPRRVAAVVVPQAAVAAGQAG</sequence>
<keyword id="KW-1003">Cell membrane</keyword>
<keyword id="KW-0350">Heme biosynthesis</keyword>
<keyword id="KW-0408">Iron</keyword>
<keyword id="KW-0472">Membrane</keyword>
<keyword id="KW-0479">Metal-binding</keyword>
<keyword id="KW-0560">Oxidoreductase</keyword>
<keyword id="KW-1185">Reference proteome</keyword>
<keyword id="KW-0812">Transmembrane</keyword>
<keyword id="KW-1133">Transmembrane helix</keyword>
<gene>
    <name evidence="1" type="primary">ctaA</name>
    <name type="ordered locus">BBta_4601</name>
</gene>
<comment type="function">
    <text evidence="1">Catalyzes the conversion of heme O to heme A by two successive hydroxylations of the methyl group at C8. The first hydroxylation forms heme I, the second hydroxylation results in an unstable dihydroxymethyl group, which spontaneously dehydrates, resulting in the formyl group of heme A.</text>
</comment>
<comment type="catalytic activity">
    <reaction evidence="1">
        <text>Fe(II)-heme o + 2 A + H2O = Fe(II)-heme a + 2 AH2</text>
        <dbReference type="Rhea" id="RHEA:63388"/>
        <dbReference type="ChEBI" id="CHEBI:13193"/>
        <dbReference type="ChEBI" id="CHEBI:15377"/>
        <dbReference type="ChEBI" id="CHEBI:17499"/>
        <dbReference type="ChEBI" id="CHEBI:60530"/>
        <dbReference type="ChEBI" id="CHEBI:61715"/>
        <dbReference type="EC" id="1.17.99.9"/>
    </reaction>
    <physiologicalReaction direction="left-to-right" evidence="1">
        <dbReference type="Rhea" id="RHEA:63389"/>
    </physiologicalReaction>
</comment>
<comment type="cofactor">
    <cofactor evidence="1">
        <name>heme b</name>
        <dbReference type="ChEBI" id="CHEBI:60344"/>
    </cofactor>
</comment>
<comment type="pathway">
    <text evidence="1">Porphyrin-containing compound metabolism; heme A biosynthesis; heme A from heme O: step 1/1.</text>
</comment>
<comment type="subunit">
    <text evidence="1">Interacts with CtaB.</text>
</comment>
<comment type="subcellular location">
    <subcellularLocation>
        <location evidence="1">Cell membrane</location>
        <topology evidence="1">Multi-pass membrane protein</topology>
    </subcellularLocation>
</comment>
<comment type="similarity">
    <text evidence="1">Belongs to the COX15/CtaA family. Type 2 subfamily.</text>
</comment>
<reference key="1">
    <citation type="journal article" date="2007" name="Science">
        <title>Legumes symbioses: absence of nod genes in photosynthetic bradyrhizobia.</title>
        <authorList>
            <person name="Giraud E."/>
            <person name="Moulin L."/>
            <person name="Vallenet D."/>
            <person name="Barbe V."/>
            <person name="Cytryn E."/>
            <person name="Avarre J.-C."/>
            <person name="Jaubert M."/>
            <person name="Simon D."/>
            <person name="Cartieaux F."/>
            <person name="Prin Y."/>
            <person name="Bena G."/>
            <person name="Hannibal L."/>
            <person name="Fardoux J."/>
            <person name="Kojadinovic M."/>
            <person name="Vuillet L."/>
            <person name="Lajus A."/>
            <person name="Cruveiller S."/>
            <person name="Rouy Z."/>
            <person name="Mangenot S."/>
            <person name="Segurens B."/>
            <person name="Dossat C."/>
            <person name="Franck W.L."/>
            <person name="Chang W.-S."/>
            <person name="Saunders E."/>
            <person name="Bruce D."/>
            <person name="Richardson P."/>
            <person name="Normand P."/>
            <person name="Dreyfus B."/>
            <person name="Pignol D."/>
            <person name="Stacey G."/>
            <person name="Emerich D."/>
            <person name="Vermeglio A."/>
            <person name="Medigue C."/>
            <person name="Sadowsky M."/>
        </authorList>
    </citation>
    <scope>NUCLEOTIDE SEQUENCE [LARGE SCALE GENOMIC DNA]</scope>
    <source>
        <strain>BTAi1 / ATCC BAA-1182</strain>
    </source>
</reference>
<accession>A5EKD5</accession>
<proteinExistence type="inferred from homology"/>
<dbReference type="EC" id="1.17.99.9" evidence="1"/>
<dbReference type="EMBL" id="CP000494">
    <property type="protein sequence ID" value="ABQ36629.1"/>
    <property type="molecule type" value="Genomic_DNA"/>
</dbReference>
<dbReference type="RefSeq" id="WP_012044620.1">
    <property type="nucleotide sequence ID" value="NC_009485.1"/>
</dbReference>
<dbReference type="SMR" id="A5EKD5"/>
<dbReference type="STRING" id="288000.BBta_4601"/>
<dbReference type="KEGG" id="bbt:BBta_4601"/>
<dbReference type="eggNOG" id="COG1612">
    <property type="taxonomic scope" value="Bacteria"/>
</dbReference>
<dbReference type="HOGENOM" id="CLU_017627_0_0_5"/>
<dbReference type="OrthoDB" id="9793156at2"/>
<dbReference type="UniPathway" id="UPA00269">
    <property type="reaction ID" value="UER00713"/>
</dbReference>
<dbReference type="Proteomes" id="UP000000246">
    <property type="component" value="Chromosome"/>
</dbReference>
<dbReference type="GO" id="GO:0005886">
    <property type="term" value="C:plasma membrane"/>
    <property type="evidence" value="ECO:0007669"/>
    <property type="project" value="UniProtKB-SubCell"/>
</dbReference>
<dbReference type="GO" id="GO:0046872">
    <property type="term" value="F:metal ion binding"/>
    <property type="evidence" value="ECO:0007669"/>
    <property type="project" value="UniProtKB-KW"/>
</dbReference>
<dbReference type="GO" id="GO:0016653">
    <property type="term" value="F:oxidoreductase activity, acting on NAD(P)H, heme protein as acceptor"/>
    <property type="evidence" value="ECO:0007669"/>
    <property type="project" value="InterPro"/>
</dbReference>
<dbReference type="GO" id="GO:0006784">
    <property type="term" value="P:heme A biosynthetic process"/>
    <property type="evidence" value="ECO:0007669"/>
    <property type="project" value="UniProtKB-UniRule"/>
</dbReference>
<dbReference type="HAMAP" id="MF_01665">
    <property type="entry name" value="HemeA_synth_type2"/>
    <property type="match status" value="1"/>
</dbReference>
<dbReference type="InterPro" id="IPR003780">
    <property type="entry name" value="COX15/CtaA_fam"/>
</dbReference>
<dbReference type="InterPro" id="IPR023754">
    <property type="entry name" value="HemeA_Synthase_type2"/>
</dbReference>
<dbReference type="PANTHER" id="PTHR23289">
    <property type="entry name" value="CYTOCHROME C OXIDASE ASSEMBLY PROTEIN COX15"/>
    <property type="match status" value="1"/>
</dbReference>
<dbReference type="PANTHER" id="PTHR23289:SF2">
    <property type="entry name" value="CYTOCHROME C OXIDASE ASSEMBLY PROTEIN COX15 HOMOLOG"/>
    <property type="match status" value="1"/>
</dbReference>
<dbReference type="Pfam" id="PF02628">
    <property type="entry name" value="COX15-CtaA"/>
    <property type="match status" value="1"/>
</dbReference>
<evidence type="ECO:0000255" key="1">
    <source>
        <dbReference type="HAMAP-Rule" id="MF_01665"/>
    </source>
</evidence>
<name>CTAA_BRASB</name>